<gene>
    <name type="primary">MYO2</name>
    <name type="synonym">CDC66</name>
    <name type="ordered locus">YOR326W</name>
    <name type="ORF">O6167</name>
</gene>
<protein>
    <recommendedName>
        <fullName>Myosin-2</fullName>
    </recommendedName>
    <alternativeName>
        <fullName>Cell division control protein 66</fullName>
    </alternativeName>
    <alternativeName>
        <fullName>Class V unconventional myosin MYO2</fullName>
    </alternativeName>
    <alternativeName>
        <fullName>Type V myosin heavy chain MYO2</fullName>
        <shortName>Myosin V MYO2</shortName>
    </alternativeName>
</protein>
<proteinExistence type="evidence at protein level"/>
<dbReference type="EMBL" id="M35532">
    <property type="protein sequence ID" value="AAA34810.1"/>
    <property type="molecule type" value="Genomic_DNA"/>
</dbReference>
<dbReference type="EMBL" id="Z75234">
    <property type="protein sequence ID" value="CAA99646.1"/>
    <property type="molecule type" value="Genomic_DNA"/>
</dbReference>
<dbReference type="EMBL" id="Z75235">
    <property type="protein sequence ID" value="CAA99648.1"/>
    <property type="molecule type" value="Genomic_DNA"/>
</dbReference>
<dbReference type="EMBL" id="X90565">
    <property type="protein sequence ID" value="CAA62184.1"/>
    <property type="molecule type" value="Genomic_DNA"/>
</dbReference>
<dbReference type="EMBL" id="Z49821">
    <property type="protein sequence ID" value="CAA89973.1"/>
    <property type="molecule type" value="Genomic_DNA"/>
</dbReference>
<dbReference type="EMBL" id="BK006948">
    <property type="protein sequence ID" value="DAA11089.1"/>
    <property type="molecule type" value="Genomic_DNA"/>
</dbReference>
<dbReference type="PIR" id="A38454">
    <property type="entry name" value="A38454"/>
</dbReference>
<dbReference type="RefSeq" id="NP_014971.1">
    <property type="nucleotide sequence ID" value="NM_001183746.1"/>
</dbReference>
<dbReference type="PDB" id="1M45">
    <property type="method" value="X-ray"/>
    <property type="resolution" value="1.65 A"/>
    <property type="chains" value="B=806-830"/>
</dbReference>
<dbReference type="PDB" id="1M46">
    <property type="method" value="X-ray"/>
    <property type="resolution" value="2.10 A"/>
    <property type="chains" value="B=854-878"/>
</dbReference>
<dbReference type="PDB" id="1N2D">
    <property type="method" value="X-ray"/>
    <property type="resolution" value="2.00 A"/>
    <property type="chains" value="C=806-853"/>
</dbReference>
<dbReference type="PDB" id="2F6H">
    <property type="method" value="X-ray"/>
    <property type="resolution" value="2.25 A"/>
    <property type="chains" value="X=1152-1570"/>
</dbReference>
<dbReference type="PDB" id="6EYW">
    <property type="method" value="X-ray"/>
    <property type="resolution" value="2.88 A"/>
    <property type="chains" value="X=1150-1574"/>
</dbReference>
<dbReference type="PDB" id="6IXO">
    <property type="method" value="X-ray"/>
    <property type="resolution" value="1.90 A"/>
    <property type="chains" value="A=1152-1574"/>
</dbReference>
<dbReference type="PDB" id="6IXP">
    <property type="method" value="X-ray"/>
    <property type="resolution" value="2.73 A"/>
    <property type="chains" value="A/D=1152-1574"/>
</dbReference>
<dbReference type="PDB" id="6IXQ">
    <property type="method" value="X-ray"/>
    <property type="resolution" value="3.06 A"/>
    <property type="chains" value="A=1152-1574"/>
</dbReference>
<dbReference type="PDB" id="6IXR">
    <property type="method" value="X-ray"/>
    <property type="resolution" value="2.85 A"/>
    <property type="chains" value="A=1152-1574"/>
</dbReference>
<dbReference type="PDB" id="8BRH">
    <property type="method" value="X-ray"/>
    <property type="resolution" value="2.40 A"/>
    <property type="chains" value="B=560-566"/>
</dbReference>
<dbReference type="PDBsum" id="1M45"/>
<dbReference type="PDBsum" id="1M46"/>
<dbReference type="PDBsum" id="1N2D"/>
<dbReference type="PDBsum" id="2F6H"/>
<dbReference type="PDBsum" id="6EYW"/>
<dbReference type="PDBsum" id="6IXO"/>
<dbReference type="PDBsum" id="6IXP"/>
<dbReference type="PDBsum" id="6IXQ"/>
<dbReference type="PDBsum" id="6IXR"/>
<dbReference type="PDBsum" id="8BRH"/>
<dbReference type="SMR" id="P19524"/>
<dbReference type="BioGRID" id="34711">
    <property type="interactions" value="787"/>
</dbReference>
<dbReference type="ComplexPortal" id="CPX-1304">
    <property type="entry name" value="MYO2-VAC17-VAC8 transport complex"/>
</dbReference>
<dbReference type="ComplexPortal" id="CPX-2225">
    <property type="entry name" value="Myosin class V complex, MYO2 variant"/>
</dbReference>
<dbReference type="DIP" id="DIP-2308N"/>
<dbReference type="FunCoup" id="P19524">
    <property type="interactions" value="822"/>
</dbReference>
<dbReference type="IntAct" id="P19524">
    <property type="interactions" value="51"/>
</dbReference>
<dbReference type="MINT" id="P19524"/>
<dbReference type="STRING" id="4932.YOR326W"/>
<dbReference type="CarbonylDB" id="P19524"/>
<dbReference type="iPTMnet" id="P19524"/>
<dbReference type="PaxDb" id="4932-YOR326W"/>
<dbReference type="PeptideAtlas" id="P19524"/>
<dbReference type="EnsemblFungi" id="YOR326W_mRNA">
    <property type="protein sequence ID" value="YOR326W"/>
    <property type="gene ID" value="YOR326W"/>
</dbReference>
<dbReference type="GeneID" id="854504"/>
<dbReference type="KEGG" id="sce:YOR326W"/>
<dbReference type="AGR" id="SGD:S000005853"/>
<dbReference type="SGD" id="S000005853">
    <property type="gene designation" value="MYO2"/>
</dbReference>
<dbReference type="VEuPathDB" id="FungiDB:YOR326W"/>
<dbReference type="eggNOG" id="KOG0160">
    <property type="taxonomic scope" value="Eukaryota"/>
</dbReference>
<dbReference type="GeneTree" id="ENSGT00940000170389"/>
<dbReference type="HOGENOM" id="CLU_000192_3_1_1"/>
<dbReference type="InParanoid" id="P19524"/>
<dbReference type="OMA" id="EIMFDDR"/>
<dbReference type="OrthoDB" id="6108017at2759"/>
<dbReference type="BioCyc" id="YEAST:G3O-33803-MONOMER"/>
<dbReference type="Reactome" id="R-SCE-9013419">
    <property type="pathway name" value="RHOT2 GTPase cycle"/>
</dbReference>
<dbReference type="Reactome" id="R-SCE-9013420">
    <property type="pathway name" value="RHOU GTPase cycle"/>
</dbReference>
<dbReference type="Reactome" id="R-SCE-9013425">
    <property type="pathway name" value="RHOT1 GTPase cycle"/>
</dbReference>
<dbReference type="BioGRID-ORCS" id="854504">
    <property type="hits" value="3 hits in 10 CRISPR screens"/>
</dbReference>
<dbReference type="EvolutionaryTrace" id="P19524"/>
<dbReference type="PRO" id="PR:P19524"/>
<dbReference type="Proteomes" id="UP000002311">
    <property type="component" value="Chromosome XV"/>
</dbReference>
<dbReference type="RNAct" id="P19524">
    <property type="molecule type" value="protein"/>
</dbReference>
<dbReference type="GO" id="GO:0015629">
    <property type="term" value="C:actin cytoskeleton"/>
    <property type="evidence" value="ECO:0000318"/>
    <property type="project" value="GO_Central"/>
</dbReference>
<dbReference type="GO" id="GO:0032432">
    <property type="term" value="C:actin filament bundle"/>
    <property type="evidence" value="ECO:0000315"/>
    <property type="project" value="SGD"/>
</dbReference>
<dbReference type="GO" id="GO:0005935">
    <property type="term" value="C:cellular bud neck"/>
    <property type="evidence" value="ECO:0000314"/>
    <property type="project" value="SGD"/>
</dbReference>
<dbReference type="GO" id="GO:0005934">
    <property type="term" value="C:cellular bud tip"/>
    <property type="evidence" value="ECO:0000314"/>
    <property type="project" value="SGD"/>
</dbReference>
<dbReference type="GO" id="GO:0005737">
    <property type="term" value="C:cytoplasm"/>
    <property type="evidence" value="ECO:0000318"/>
    <property type="project" value="GO_Central"/>
</dbReference>
<dbReference type="GO" id="GO:0031941">
    <property type="term" value="C:filamentous actin"/>
    <property type="evidence" value="ECO:0000314"/>
    <property type="project" value="SGD"/>
</dbReference>
<dbReference type="GO" id="GO:0000329">
    <property type="term" value="C:fungal-type vacuole membrane"/>
    <property type="evidence" value="ECO:0000314"/>
    <property type="project" value="ComplexPortal"/>
</dbReference>
<dbReference type="GO" id="GO:0000131">
    <property type="term" value="C:incipient cellular bud site"/>
    <property type="evidence" value="ECO:0000314"/>
    <property type="project" value="SGD"/>
</dbReference>
<dbReference type="GO" id="GO:0043332">
    <property type="term" value="C:mating projection tip"/>
    <property type="evidence" value="ECO:0000314"/>
    <property type="project" value="SGD"/>
</dbReference>
<dbReference type="GO" id="GO:0034993">
    <property type="term" value="C:meiotic nuclear membrane microtubule tethering complex"/>
    <property type="evidence" value="ECO:0000315"/>
    <property type="project" value="SGD"/>
</dbReference>
<dbReference type="GO" id="GO:0016020">
    <property type="term" value="C:membrane"/>
    <property type="evidence" value="ECO:0000318"/>
    <property type="project" value="GO_Central"/>
</dbReference>
<dbReference type="GO" id="GO:0071563">
    <property type="term" value="C:Myo2p-Vac17p-Vac8p transport complex"/>
    <property type="evidence" value="ECO:0000353"/>
    <property type="project" value="ComplexPortal"/>
</dbReference>
<dbReference type="GO" id="GO:0031475">
    <property type="term" value="C:myosin V complex"/>
    <property type="evidence" value="ECO:0000303"/>
    <property type="project" value="ComplexPortal"/>
</dbReference>
<dbReference type="GO" id="GO:0030133">
    <property type="term" value="C:transport vesicle"/>
    <property type="evidence" value="ECO:0000314"/>
    <property type="project" value="SGD"/>
</dbReference>
<dbReference type="GO" id="GO:0031982">
    <property type="term" value="C:vesicle"/>
    <property type="evidence" value="ECO:0000314"/>
    <property type="project" value="SGD"/>
</dbReference>
<dbReference type="GO" id="GO:0051015">
    <property type="term" value="F:actin filament binding"/>
    <property type="evidence" value="ECO:0000314"/>
    <property type="project" value="SGD"/>
</dbReference>
<dbReference type="GO" id="GO:0005524">
    <property type="term" value="F:ATP binding"/>
    <property type="evidence" value="ECO:0007669"/>
    <property type="project" value="UniProtKB-KW"/>
</dbReference>
<dbReference type="GO" id="GO:0005516">
    <property type="term" value="F:calmodulin binding"/>
    <property type="evidence" value="ECO:0000314"/>
    <property type="project" value="SGD"/>
</dbReference>
<dbReference type="GO" id="GO:0000146">
    <property type="term" value="F:microfilament motor activity"/>
    <property type="evidence" value="ECO:0000314"/>
    <property type="project" value="SGD"/>
</dbReference>
<dbReference type="GO" id="GO:0031267">
    <property type="term" value="F:small GTPase binding"/>
    <property type="evidence" value="ECO:0000353"/>
    <property type="project" value="SGD"/>
</dbReference>
<dbReference type="GO" id="GO:0007015">
    <property type="term" value="P:actin filament organization"/>
    <property type="evidence" value="ECO:0000318"/>
    <property type="project" value="GO_Central"/>
</dbReference>
<dbReference type="GO" id="GO:0000132">
    <property type="term" value="P:establishment of mitotic spindle orientation"/>
    <property type="evidence" value="ECO:0000315"/>
    <property type="project" value="SGD"/>
</dbReference>
<dbReference type="GO" id="GO:0048313">
    <property type="term" value="P:Golgi inheritance"/>
    <property type="evidence" value="ECO:0000315"/>
    <property type="project" value="SGD"/>
</dbReference>
<dbReference type="GO" id="GO:0048312">
    <property type="term" value="P:intracellular distribution of mitochondria"/>
    <property type="evidence" value="ECO:0000315"/>
    <property type="project" value="SGD"/>
</dbReference>
<dbReference type="GO" id="GO:0007107">
    <property type="term" value="P:membrane addition at site of cytokinesis"/>
    <property type="evidence" value="ECO:0000315"/>
    <property type="project" value="SGD"/>
</dbReference>
<dbReference type="GO" id="GO:0000001">
    <property type="term" value="P:mitochondrion inheritance"/>
    <property type="evidence" value="ECO:0000315"/>
    <property type="project" value="SGD"/>
</dbReference>
<dbReference type="GO" id="GO:0045033">
    <property type="term" value="P:peroxisome inheritance"/>
    <property type="evidence" value="ECO:0000315"/>
    <property type="project" value="SGD"/>
</dbReference>
<dbReference type="GO" id="GO:0015031">
    <property type="term" value="P:protein transport"/>
    <property type="evidence" value="ECO:0007669"/>
    <property type="project" value="UniProtKB-KW"/>
</dbReference>
<dbReference type="GO" id="GO:0000011">
    <property type="term" value="P:vacuole inheritance"/>
    <property type="evidence" value="ECO:0000314"/>
    <property type="project" value="ComplexPortal"/>
</dbReference>
<dbReference type="GO" id="GO:0006904">
    <property type="term" value="P:vesicle docking involved in exocytosis"/>
    <property type="evidence" value="ECO:0000316"/>
    <property type="project" value="SGD"/>
</dbReference>
<dbReference type="GO" id="GO:0030050">
    <property type="term" value="P:vesicle transport along actin filament"/>
    <property type="evidence" value="ECO:0000315"/>
    <property type="project" value="SGD"/>
</dbReference>
<dbReference type="GO" id="GO:0016192">
    <property type="term" value="P:vesicle-mediated transport"/>
    <property type="evidence" value="ECO:0000315"/>
    <property type="project" value="SGD"/>
</dbReference>
<dbReference type="CDD" id="cd15480">
    <property type="entry name" value="fMyo2p_CBD"/>
    <property type="match status" value="1"/>
</dbReference>
<dbReference type="CDD" id="cd01380">
    <property type="entry name" value="MYSc_Myo5"/>
    <property type="match status" value="1"/>
</dbReference>
<dbReference type="FunFam" id="1.20.120.720:FF:000023">
    <property type="entry name" value="Class V myosin"/>
    <property type="match status" value="1"/>
</dbReference>
<dbReference type="FunFam" id="1.20.58.530:FF:000002">
    <property type="entry name" value="Class V myosin"/>
    <property type="match status" value="1"/>
</dbReference>
<dbReference type="FunFam" id="1.10.10.820:FF:000001">
    <property type="entry name" value="Myosin heavy chain"/>
    <property type="match status" value="1"/>
</dbReference>
<dbReference type="Gene3D" id="1.10.10.820">
    <property type="match status" value="1"/>
</dbReference>
<dbReference type="Gene3D" id="1.20.5.190">
    <property type="match status" value="2"/>
</dbReference>
<dbReference type="Gene3D" id="1.20.58.530">
    <property type="match status" value="1"/>
</dbReference>
<dbReference type="Gene3D" id="6.20.240.20">
    <property type="match status" value="1"/>
</dbReference>
<dbReference type="Gene3D" id="3.40.850.10">
    <property type="entry name" value="Kinesin motor domain"/>
    <property type="match status" value="1"/>
</dbReference>
<dbReference type="Gene3D" id="1.20.120.720">
    <property type="entry name" value="Myosin VI head, motor domain, U50 subdomain"/>
    <property type="match status" value="1"/>
</dbReference>
<dbReference type="InterPro" id="IPR002710">
    <property type="entry name" value="Dilute_dom"/>
</dbReference>
<dbReference type="InterPro" id="IPR046943">
    <property type="entry name" value="Fungal_Myo2/2A_CBD"/>
</dbReference>
<dbReference type="InterPro" id="IPR000048">
    <property type="entry name" value="IQ_motif_EF-hand-BS"/>
</dbReference>
<dbReference type="InterPro" id="IPR036961">
    <property type="entry name" value="Kinesin_motor_dom_sf"/>
</dbReference>
<dbReference type="InterPro" id="IPR001609">
    <property type="entry name" value="Myosin_head_motor_dom-like"/>
</dbReference>
<dbReference type="InterPro" id="IPR004009">
    <property type="entry name" value="Myosin_N"/>
</dbReference>
<dbReference type="InterPro" id="IPR036103">
    <property type="entry name" value="MYSc_Myo5"/>
</dbReference>
<dbReference type="InterPro" id="IPR027417">
    <property type="entry name" value="P-loop_NTPase"/>
</dbReference>
<dbReference type="PANTHER" id="PTHR13140:SF706">
    <property type="entry name" value="DILUTE CLASS UNCONVENTIONAL MYOSIN, ISOFORM C"/>
    <property type="match status" value="1"/>
</dbReference>
<dbReference type="PANTHER" id="PTHR13140">
    <property type="entry name" value="MYOSIN"/>
    <property type="match status" value="1"/>
</dbReference>
<dbReference type="Pfam" id="PF01843">
    <property type="entry name" value="DIL"/>
    <property type="match status" value="1"/>
</dbReference>
<dbReference type="Pfam" id="PF00063">
    <property type="entry name" value="Myosin_head"/>
    <property type="match status" value="1"/>
</dbReference>
<dbReference type="PRINTS" id="PR00193">
    <property type="entry name" value="MYOSINHEAVY"/>
</dbReference>
<dbReference type="SMART" id="SM01132">
    <property type="entry name" value="DIL"/>
    <property type="match status" value="1"/>
</dbReference>
<dbReference type="SMART" id="SM00015">
    <property type="entry name" value="IQ"/>
    <property type="match status" value="4"/>
</dbReference>
<dbReference type="SMART" id="SM00242">
    <property type="entry name" value="MYSc"/>
    <property type="match status" value="1"/>
</dbReference>
<dbReference type="SUPFAM" id="SSF50084">
    <property type="entry name" value="Myosin S1 fragment, N-terminal domain"/>
    <property type="match status" value="1"/>
</dbReference>
<dbReference type="SUPFAM" id="SSF52540">
    <property type="entry name" value="P-loop containing nucleoside triphosphate hydrolases"/>
    <property type="match status" value="2"/>
</dbReference>
<dbReference type="PROSITE" id="PS51126">
    <property type="entry name" value="DILUTE"/>
    <property type="match status" value="1"/>
</dbReference>
<dbReference type="PROSITE" id="PS50096">
    <property type="entry name" value="IQ"/>
    <property type="match status" value="1"/>
</dbReference>
<dbReference type="PROSITE" id="PS51456">
    <property type="entry name" value="MYOSIN_MOTOR"/>
    <property type="match status" value="1"/>
</dbReference>
<dbReference type="PROSITE" id="PS51844">
    <property type="entry name" value="SH3_LIKE"/>
    <property type="match status" value="1"/>
</dbReference>
<keyword id="KW-0002">3D-structure</keyword>
<keyword id="KW-0007">Acetylation</keyword>
<keyword id="KW-0009">Actin-binding</keyword>
<keyword id="KW-0067">ATP-binding</keyword>
<keyword id="KW-0112">Calmodulin-binding</keyword>
<keyword id="KW-0131">Cell cycle</keyword>
<keyword id="KW-0132">Cell division</keyword>
<keyword id="KW-0175">Coiled coil</keyword>
<keyword id="KW-0505">Motor protein</keyword>
<keyword id="KW-0518">Myosin</keyword>
<keyword id="KW-0547">Nucleotide-binding</keyword>
<keyword id="KW-0597">Phosphoprotein</keyword>
<keyword id="KW-0653">Protein transport</keyword>
<keyword id="KW-1185">Reference proteome</keyword>
<keyword id="KW-0677">Repeat</keyword>
<keyword id="KW-0813">Transport</keyword>
<feature type="initiator methionine" description="Removed" evidence="31">
    <location>
        <position position="1"/>
    </location>
</feature>
<feature type="chain" id="PRO_0000123489" description="Myosin-2">
    <location>
        <begin position="2"/>
        <end position="1574"/>
    </location>
</feature>
<feature type="domain" description="Myosin N-terminal SH3-like" evidence="5">
    <location>
        <begin position="4"/>
        <end position="57"/>
    </location>
</feature>
<feature type="domain" description="Myosin motor" evidence="4">
    <location>
        <begin position="70"/>
        <end position="781"/>
    </location>
</feature>
<feature type="domain" description="IQ 1" evidence="2">
    <location>
        <begin position="784"/>
        <end position="806"/>
    </location>
</feature>
<feature type="domain" description="IQ 2" evidence="2">
    <location>
        <begin position="807"/>
        <end position="831"/>
    </location>
</feature>
<feature type="domain" description="IQ 3" evidence="2">
    <location>
        <begin position="832"/>
        <end position="855"/>
    </location>
</feature>
<feature type="domain" description="IQ 4" evidence="2">
    <location>
        <begin position="856"/>
        <end position="879"/>
    </location>
</feature>
<feature type="domain" description="IQ 5" evidence="2">
    <location>
        <begin position="880"/>
        <end position="902"/>
    </location>
</feature>
<feature type="domain" description="IQ 6" evidence="2">
    <location>
        <begin position="903"/>
        <end position="932"/>
    </location>
</feature>
<feature type="domain" description="Dilute" evidence="3">
    <location>
        <begin position="1226"/>
        <end position="1501"/>
    </location>
</feature>
<feature type="region of interest" description="Actin-binding" evidence="1">
    <location>
        <begin position="443"/>
        <end position="523"/>
    </location>
</feature>
<feature type="region of interest" description="Non alpha-helical, tail domain">
    <location>
        <begin position="1087"/>
        <end position="1574"/>
    </location>
</feature>
<feature type="coiled-coil region">
    <location>
        <begin position="933"/>
        <end position="1088"/>
    </location>
</feature>
<feature type="binding site" evidence="1">
    <location>
        <begin position="164"/>
        <end position="171"/>
    </location>
    <ligand>
        <name>ATP</name>
        <dbReference type="ChEBI" id="CHEBI:30616"/>
    </ligand>
</feature>
<feature type="modified residue" description="N-acetylserine" evidence="31">
    <location>
        <position position="2"/>
    </location>
</feature>
<feature type="modified residue" description="Phosphothreonine" evidence="30">
    <location>
        <position position="1097"/>
    </location>
</feature>
<feature type="modified residue" description="Phosphoserine" evidence="30">
    <location>
        <position position="1121"/>
    </location>
</feature>
<feature type="mutagenesis site" description="In MYO2-66; disrupts actin binding." evidence="25">
    <original>E</original>
    <variation>K</variation>
    <location>
        <position position="511"/>
    </location>
</feature>
<feature type="mutagenesis site" description="In MYO2-573; causes a mitochondria inheritance defect; when associated with G-1288; M-1500; S-1529; G-1546 and R-1559." evidence="15">
    <original>V</original>
    <variation>A</variation>
    <location>
        <position position="1189"/>
    </location>
</feature>
<feature type="mutagenesis site" description="Intragenic suppressor of MYO2-2." evidence="18">
    <original>S</original>
    <variation>G</variation>
    <location>
        <position position="1247"/>
    </location>
</feature>
<feature type="mutagenesis site" description="In MYO2-2; causes a vacuole inheritance defect." evidence="28">
    <original>G</original>
    <variation>D</variation>
    <location>
        <position position="1248"/>
    </location>
</feature>
<feature type="mutagenesis site" description="Intragenic suppressor of MYO2-2." evidence="18">
    <original>V</original>
    <variation>A</variation>
    <location>
        <position position="1262"/>
    </location>
</feature>
<feature type="mutagenesis site" description="Intragenic suppressor of MYO2-2." evidence="18">
    <original>F</original>
    <variation>S</variation>
    <location>
        <position position="1264"/>
    </location>
</feature>
<feature type="mutagenesis site" description="Intragenic suppressor of MYO2-2." evidence="18">
    <original>S</original>
    <variation>P</variation>
    <location>
        <position position="1268"/>
    </location>
</feature>
<feature type="mutagenesis site" description="Intragenic suppressor of MYO2-2." evidence="18">
    <original>T</original>
    <variation>M</variation>
    <location>
        <position position="1274"/>
    </location>
</feature>
<feature type="mutagenesis site" description="Intragenic suppressor of MYO2-2." evidence="18">
    <original>F</original>
    <variation>S</variation>
    <location>
        <position position="1275"/>
    </location>
</feature>
<feature type="mutagenesis site" description="Intragenic suppressor of MYO2-2." evidence="15 18">
    <original>V</original>
    <variation>A</variation>
    <location>
        <position position="1288"/>
    </location>
</feature>
<feature type="mutagenesis site" description="In MYO2-573; causes a mitochondria inheritance defect; when associated with A-1189; M-1500; S-1529; G-1546 and R-1559." evidence="15 18">
    <original>V</original>
    <variation>G</variation>
    <location>
        <position position="1288"/>
    </location>
</feature>
<feature type="mutagenesis site" description="Causes a vacuole inheritance defect." evidence="8">
    <original>D</original>
    <variation>G</variation>
    <variation>N</variation>
    <variation>V</variation>
    <location>
        <position position="1297"/>
    </location>
</feature>
<feature type="mutagenesis site" description="Causes a vacuole inheritance defect." evidence="8">
    <original>L</original>
    <variation>P</variation>
    <location>
        <position position="1301"/>
    </location>
</feature>
<feature type="mutagenesis site" description="Causes a vacuole inheritance defect." evidence="8">
    <original>N</original>
    <variation>D</variation>
    <variation>S</variation>
    <location>
        <position position="1304"/>
    </location>
</feature>
<feature type="mutagenesis site" description="Causes a vacuole inheritance defect." evidence="8">
    <original>N</original>
    <variation>D</variation>
    <location>
        <position position="1307"/>
    </location>
</feature>
<feature type="mutagenesis site" description="In MYO2-338; abolishes interaction with YPT11; when associated with G-1484 and G-1511." evidence="15">
    <original>L</original>
    <variation>S</variation>
    <location>
        <position position="1474"/>
    </location>
</feature>
<feature type="mutagenesis site" description="In MYO2-338; abolishes interaction with YPT11; when associated with S-1474 and G-1511." evidence="15">
    <original>E</original>
    <variation>G</variation>
    <location>
        <position position="1484"/>
    </location>
</feature>
<feature type="mutagenesis site" description="In MYO2-573; causes a mitochondria inheritance defect; when associated with A-1189; G-1288; S-1529; G-1546 and R-1559." evidence="15">
    <original>K</original>
    <variation>M</variation>
    <location>
        <position position="1500"/>
    </location>
</feature>
<feature type="mutagenesis site" description="In MYO2-338; abolishes interaction with YPT11; when associated with S-1474 and G-1484." evidence="15">
    <original>D</original>
    <variation>G</variation>
    <location>
        <position position="1511"/>
    </location>
</feature>
<feature type="mutagenesis site" description="In MYO2-573; causes a mitochondria inheritance defect; when associated with A-1189; G-1288; M-1500; G-1546 and R-1559." evidence="15">
    <original>P</original>
    <variation>S</variation>
    <location>
        <position position="1529"/>
    </location>
</feature>
<feature type="mutagenesis site" description="In MYO2-573; causes a mitochondria inheritance defect; when associated with A-1189; G-1288; M-1500; S-1529 and R-1559." evidence="15">
    <original>E</original>
    <variation>G</variation>
    <location>
        <position position="1546"/>
    </location>
</feature>
<feature type="mutagenesis site" description="In MYO2-573; causes a mitochondria inheritance defect; when associated with A-1189; G-1288; M-1500; S-1529 and G-1546." evidence="15">
    <original>K</original>
    <variation>R</variation>
    <location>
        <position position="1559"/>
    </location>
</feature>
<feature type="helix" evidence="32">
    <location>
        <begin position="807"/>
        <end position="829"/>
    </location>
</feature>
<feature type="helix" evidence="33">
    <location>
        <begin position="855"/>
        <end position="877"/>
    </location>
</feature>
<feature type="helix" evidence="35">
    <location>
        <begin position="1153"/>
        <end position="1165"/>
    </location>
</feature>
<feature type="helix" evidence="35">
    <location>
        <begin position="1167"/>
        <end position="1176"/>
    </location>
</feature>
<feature type="turn" evidence="35">
    <location>
        <begin position="1177"/>
        <end position="1181"/>
    </location>
</feature>
<feature type="strand" evidence="37">
    <location>
        <begin position="1188"/>
        <end position="1191"/>
    </location>
</feature>
<feature type="helix" evidence="35">
    <location>
        <begin position="1195"/>
        <end position="1198"/>
    </location>
</feature>
<feature type="helix" evidence="35">
    <location>
        <begin position="1200"/>
        <end position="1214"/>
    </location>
</feature>
<feature type="helix" evidence="35">
    <location>
        <begin position="1218"/>
        <end position="1237"/>
    </location>
</feature>
<feature type="helix" evidence="35">
    <location>
        <begin position="1241"/>
        <end position="1243"/>
    </location>
</feature>
<feature type="helix" evidence="35">
    <location>
        <begin position="1244"/>
        <end position="1271"/>
    </location>
</feature>
<feature type="helix" evidence="36">
    <location>
        <begin position="1273"/>
        <end position="1276"/>
    </location>
</feature>
<feature type="helix" evidence="35">
    <location>
        <begin position="1281"/>
        <end position="1326"/>
    </location>
</feature>
<feature type="turn" evidence="34">
    <location>
        <begin position="1332"/>
        <end position="1335"/>
    </location>
</feature>
<feature type="helix" evidence="35">
    <location>
        <begin position="1355"/>
        <end position="1371"/>
    </location>
</feature>
<feature type="helix" evidence="35">
    <location>
        <begin position="1376"/>
        <end position="1400"/>
    </location>
</feature>
<feature type="helix" evidence="35">
    <location>
        <begin position="1407"/>
        <end position="1426"/>
    </location>
</feature>
<feature type="helix" evidence="35">
    <location>
        <begin position="1432"/>
        <end position="1435"/>
    </location>
</feature>
<feature type="helix" evidence="35">
    <location>
        <begin position="1437"/>
        <end position="1447"/>
    </location>
</feature>
<feature type="helix" evidence="35">
    <location>
        <begin position="1453"/>
        <end position="1462"/>
    </location>
</feature>
<feature type="turn" evidence="35">
    <location>
        <begin position="1463"/>
        <end position="1465"/>
    </location>
</feature>
<feature type="helix" evidence="35">
    <location>
        <begin position="1468"/>
        <end position="1476"/>
    </location>
</feature>
<feature type="strand" evidence="37">
    <location>
        <begin position="1482"/>
        <end position="1484"/>
    </location>
</feature>
<feature type="helix" evidence="35">
    <location>
        <begin position="1489"/>
        <end position="1503"/>
    </location>
</feature>
<feature type="helix" evidence="34">
    <location>
        <begin position="1505"/>
        <end position="1507"/>
    </location>
</feature>
<feature type="helix" evidence="35">
    <location>
        <begin position="1533"/>
        <end position="1536"/>
    </location>
</feature>
<feature type="helix" evidence="35">
    <location>
        <begin position="1556"/>
        <end position="1568"/>
    </location>
</feature>
<reference key="1">
    <citation type="journal article" date="1991" name="J. Cell Biol.">
        <title>The Saccharomyces cerevisiae MYO2 gene encodes an essential myosin for vectorial transport of vesicles.</title>
        <authorList>
            <person name="Johnston G.C."/>
            <person name="Prendergast J.A."/>
            <person name="Singer R.A."/>
        </authorList>
    </citation>
    <scope>NUCLEOTIDE SEQUENCE [GENOMIC DNA]</scope>
    <source>
        <strain>S288c / GRF88</strain>
    </source>
</reference>
<reference key="2">
    <citation type="journal article" date="1997" name="Nature">
        <title>The nucleotide sequence of Saccharomyces cerevisiae chromosome XV.</title>
        <authorList>
            <person name="Dujon B."/>
            <person name="Albermann K."/>
            <person name="Aldea M."/>
            <person name="Alexandraki D."/>
            <person name="Ansorge W."/>
            <person name="Arino J."/>
            <person name="Benes V."/>
            <person name="Bohn C."/>
            <person name="Bolotin-Fukuhara M."/>
            <person name="Bordonne R."/>
            <person name="Boyer J."/>
            <person name="Camasses A."/>
            <person name="Casamayor A."/>
            <person name="Casas C."/>
            <person name="Cheret G."/>
            <person name="Cziepluch C."/>
            <person name="Daignan-Fornier B."/>
            <person name="Dang V.-D."/>
            <person name="de Haan M."/>
            <person name="Delius H."/>
            <person name="Durand P."/>
            <person name="Fairhead C."/>
            <person name="Feldmann H."/>
            <person name="Gaillon L."/>
            <person name="Galisson F."/>
            <person name="Gamo F.-J."/>
            <person name="Gancedo C."/>
            <person name="Goffeau A."/>
            <person name="Goulding S.E."/>
            <person name="Grivell L.A."/>
            <person name="Habbig B."/>
            <person name="Hand N.J."/>
            <person name="Hani J."/>
            <person name="Hattenhorst U."/>
            <person name="Hebling U."/>
            <person name="Hernando Y."/>
            <person name="Herrero E."/>
            <person name="Heumann K."/>
            <person name="Hiesel R."/>
            <person name="Hilger F."/>
            <person name="Hofmann B."/>
            <person name="Hollenberg C.P."/>
            <person name="Hughes B."/>
            <person name="Jauniaux J.-C."/>
            <person name="Kalogeropoulos A."/>
            <person name="Katsoulou C."/>
            <person name="Kordes E."/>
            <person name="Lafuente M.J."/>
            <person name="Landt O."/>
            <person name="Louis E.J."/>
            <person name="Maarse A.C."/>
            <person name="Madania A."/>
            <person name="Mannhaupt G."/>
            <person name="Marck C."/>
            <person name="Martin R.P."/>
            <person name="Mewes H.-W."/>
            <person name="Michaux G."/>
            <person name="Paces V."/>
            <person name="Parle-McDermott A.G."/>
            <person name="Pearson B.M."/>
            <person name="Perrin A."/>
            <person name="Pettersson B."/>
            <person name="Poch O."/>
            <person name="Pohl T.M."/>
            <person name="Poirey R."/>
            <person name="Portetelle D."/>
            <person name="Pujol A."/>
            <person name="Purnelle B."/>
            <person name="Ramezani Rad M."/>
            <person name="Rechmann S."/>
            <person name="Schwager C."/>
            <person name="Schweizer M."/>
            <person name="Sor F."/>
            <person name="Sterky F."/>
            <person name="Tarassov I.A."/>
            <person name="Teodoru C."/>
            <person name="Tettelin H."/>
            <person name="Thierry A."/>
            <person name="Tobiasch E."/>
            <person name="Tzermia M."/>
            <person name="Uhlen M."/>
            <person name="Unseld M."/>
            <person name="Valens M."/>
            <person name="Vandenbol M."/>
            <person name="Vetter I."/>
            <person name="Vlcek C."/>
            <person name="Voet M."/>
            <person name="Volckaert G."/>
            <person name="Voss H."/>
            <person name="Wambutt R."/>
            <person name="Wedler H."/>
            <person name="Wiemann S."/>
            <person name="Winsor B."/>
            <person name="Wolfe K.H."/>
            <person name="Zollner A."/>
            <person name="Zumstein E."/>
            <person name="Kleine K."/>
        </authorList>
    </citation>
    <scope>NUCLEOTIDE SEQUENCE [LARGE SCALE GENOMIC DNA]</scope>
    <source>
        <strain>ATCC 204508 / S288c</strain>
    </source>
</reference>
<reference key="3">
    <citation type="journal article" date="2014" name="G3 (Bethesda)">
        <title>The reference genome sequence of Saccharomyces cerevisiae: Then and now.</title>
        <authorList>
            <person name="Engel S.R."/>
            <person name="Dietrich F.S."/>
            <person name="Fisk D.G."/>
            <person name="Binkley G."/>
            <person name="Balakrishnan R."/>
            <person name="Costanzo M.C."/>
            <person name="Dwight S.S."/>
            <person name="Hitz B.C."/>
            <person name="Karra K."/>
            <person name="Nash R.S."/>
            <person name="Weng S."/>
            <person name="Wong E.D."/>
            <person name="Lloyd P."/>
            <person name="Skrzypek M.S."/>
            <person name="Miyasato S.R."/>
            <person name="Simison M."/>
            <person name="Cherry J.M."/>
        </authorList>
    </citation>
    <scope>GENOME REANNOTATION</scope>
    <source>
        <strain>ATCC 204508 / S288c</strain>
    </source>
</reference>
<reference key="4">
    <citation type="journal article" date="1996" name="Yeast">
        <title>Sequencing of a 35.71 kb DNA segment on the right arm of yeast chromosome XV reveals regions of similarity to chromosomes I and XIII.</title>
        <authorList>
            <person name="Pearson B.M."/>
            <person name="Hernando Y."/>
            <person name="Payne J."/>
            <person name="Wolf S.S."/>
            <person name="Kalogeropoulos A."/>
            <person name="Schweizer M."/>
        </authorList>
    </citation>
    <scope>NUCLEOTIDE SEQUENCE [GENOMIC DNA] OF 1-748</scope>
    <source>
        <strain>ATCC 96604 / S288c / FY1679</strain>
    </source>
</reference>
<reference key="5">
    <citation type="journal article" date="1996" name="Yeast">
        <title>Sequence of 29 kb around the PDR10 locus on the right arm of Saccharomyces cerevisiae chromosome XV: similarity to part of chromosome I.</title>
        <authorList>
            <person name="Parle-McDermott A.G."/>
            <person name="Hand N.J."/>
            <person name="Goulding S.E."/>
            <person name="Wolfe K.H."/>
        </authorList>
    </citation>
    <scope>NUCLEOTIDE SEQUENCE [GENOMIC DNA] OF 677-1574</scope>
</reference>
<reference key="6">
    <citation type="journal article" date="1994" name="J. Cell Biol.">
        <title>The unconventional myosin, Myo2p, is a calmodulin target at sites of cell growth in Saccharomyces cerevisiae.</title>
        <authorList>
            <person name="Brockerhoff S.E."/>
            <person name="Stevens R.C."/>
            <person name="Davis T.N."/>
        </authorList>
    </citation>
    <scope>INTERACTION WITH CMD1</scope>
</reference>
<reference key="7">
    <citation type="journal article" date="1994" name="J. Cell Biol.">
        <title>Immunofluorescence localization of the unconventional myosin, Myo2p, and the putative kinesin-related protein, Smy1p, to the same regions of polarized growth in Saccharomyces cerevisiae.</title>
        <authorList>
            <person name="Lillie S.H."/>
            <person name="Brown S.S."/>
        </authorList>
    </citation>
    <scope>SUBCELLULAR LOCATION</scope>
    <scope>MUTAGENESIS OF GLU-511</scope>
</reference>
<reference key="8">
    <citation type="journal article" date="1998" name="J. Cell Biol.">
        <title>Mlc1p is a light chain for the unconventional myosin Myo2p in Saccharomyces cerevisiae.</title>
        <authorList>
            <person name="Stevens R.C."/>
            <person name="Davis T.N."/>
        </authorList>
    </citation>
    <scope>INTERACTION WITH MLC1</scope>
</reference>
<reference key="9">
    <citation type="journal article" date="1998" name="Proc. Natl. Acad. Sci. U.S.A.">
        <title>The terminal tail region of a yeast myosin-V mediates its attachment to vacuole membranes and sites of polarized growth.</title>
        <authorList>
            <person name="Catlett N.L."/>
            <person name="Weisman L.S."/>
        </authorList>
    </citation>
    <scope>MUTAGENESIS OF GLY-1248</scope>
</reference>
<reference key="10">
    <citation type="journal article" date="1999" name="Mol. Cell. Biol.">
        <title>Rho3 of Saccharomyces cerevisiae, which regulates the actin cytoskeleton and exocytosis, is a GTPase which interacts with Myo2 and Exo70.</title>
        <authorList>
            <person name="Robinson N.G.G."/>
            <person name="Guo L."/>
            <person name="Imai J."/>
            <person name="Toh-e A."/>
            <person name="Matsui Y."/>
            <person name="Tamanoi F."/>
        </authorList>
    </citation>
    <scope>INTERACTION WITH RHO3</scope>
</reference>
<reference key="11">
    <citation type="journal article" date="2000" name="J. Cell Biol.">
        <title>Two distinct regions in a yeast myosin-V tail domain are required for the movement of different cargoes.</title>
        <authorList>
            <person name="Catlett N.L."/>
            <person name="Duex J.E."/>
            <person name="Tang F."/>
            <person name="Weisman L.S."/>
        </authorList>
    </citation>
    <scope>FUNCTION</scope>
    <scope>MUTAGENESIS OF ASP-1297; LEU-1301; ASN-1304 AND ASN-1307</scope>
</reference>
<reference key="12">
    <citation type="journal article" date="2000" name="Mol. Biol. Cell">
        <title>The yeast kinesin-related protein Smy1p exerts its effects on the class V myosin Myo2p via a physical interaction.</title>
        <authorList>
            <person name="Beningo K.A."/>
            <person name="Lillie S.H."/>
            <person name="Brown S.S."/>
        </authorList>
    </citation>
    <scope>INTERACTION WITH SMY1</scope>
</reference>
<reference key="13">
    <citation type="journal article" date="2000" name="Nature">
        <title>Myosin V orientates the mitotic spindle in yeast.</title>
        <authorList>
            <person name="Yin H."/>
            <person name="Pruyne D."/>
            <person name="Huffaker T.C."/>
            <person name="Bretscher A."/>
        </authorList>
    </citation>
    <scope>INTERACTION WITH KAR9</scope>
</reference>
<reference key="14">
    <citation type="journal article" date="2001" name="J. Cell Biol.">
        <title>A role for actin, Cdc1p, and Myo2p in the inheritance of late Golgi elements in Saccharomyces cerevisiae.</title>
        <authorList>
            <person name="Rossanese O.W."/>
            <person name="Reinke C.A."/>
            <person name="Bevis B.J."/>
            <person name="Hammond A.T."/>
            <person name="Sears I.B."/>
            <person name="O'Connor J."/>
            <person name="Glick B.S."/>
        </authorList>
    </citation>
    <scope>FUNCTION</scope>
</reference>
<reference key="15">
    <citation type="journal article" date="2001" name="J. Cell Biol.">
        <title>The yeast class V myosins, Myo2p and Myo4p, are nonprocessive actin-based motors.</title>
        <authorList>
            <person name="Reck-Peterson S.L."/>
            <person name="Tyska M.J."/>
            <person name="Novick P.J."/>
            <person name="Mooseker M.S."/>
        </authorList>
    </citation>
    <scope>FUNCTION</scope>
</reference>
<reference key="16">
    <citation type="journal article" date="2001" name="J. Cell Biol.">
        <authorList>
            <person name="Reck-Peterson S.L."/>
            <person name="Tyska M.J."/>
            <person name="Novick P.J."/>
            <person name="Mooseker M.S."/>
        </authorList>
    </citation>
    <scope>ERRATUM OF PUBMED:11381095</scope>
</reference>
<reference key="17">
    <citation type="journal article" date="2001" name="J. Cell Biol.">
        <title>A role for Vps1p, actin, and the Myo2p motor in peroxisome abundance and inheritance in Saccharomyces cerevisiae.</title>
        <authorList>
            <person name="Hoepfner D."/>
            <person name="van den Berg M."/>
            <person name="Philippsen P."/>
            <person name="Tabak H.F."/>
            <person name="Hettema E.H."/>
        </authorList>
    </citation>
    <scope>FUNCTION</scope>
</reference>
<reference key="18">
    <citation type="journal article" date="2002" name="EMBO J.">
        <title>Mlc1p promotes septum closure during cytokinesis via the IQ motifs of the vesicle motor Myo2p.</title>
        <authorList>
            <person name="Wagner W."/>
            <person name="Bielli P."/>
            <person name="Wacha S."/>
            <person name="Ragnini-Wilson A."/>
        </authorList>
    </citation>
    <scope>INTERACTION WITH MLC1 AND SEC4</scope>
</reference>
<reference key="19">
    <citation type="journal article" date="2002" name="J. Cell Biol.">
        <title>Secretory vesicle transport velocity in living cells depends on the myosin-V lever arm length.</title>
        <authorList>
            <person name="Schott D.H."/>
            <person name="Collins R.N."/>
            <person name="Bretscher A."/>
        </authorList>
    </citation>
    <scope>FUNCTION</scope>
</reference>
<reference key="20">
    <citation type="journal article" date="2002" name="Mol. Cell. Biol.">
        <title>Complex formation with Ypt11p, a rab-type small GTPase, is essential to facilitate the function of Myo2p, a class V myosin, in mitochondrial distribution in Saccharomyces cerevisiae.</title>
        <authorList>
            <person name="Itoh T."/>
            <person name="Watabe A."/>
            <person name="Toh-e A."/>
            <person name="Matsui Y."/>
        </authorList>
    </citation>
    <scope>FUNCTION</scope>
    <scope>INTERACTION WITH YPT11</scope>
    <scope>MUTAGENESIS OF VAL-1189; VAL-1288; LEU-1474; GLU-1484; LYS-1500; ASP-1511; PRO-1529; GLU-1546 AND LYS-1559</scope>
</reference>
<reference key="21">
    <citation type="journal article" date="2003" name="Curr. Biol.">
        <title>The UCS domain protein She4p binds to myosin motor domains and is essential for class I and class V myosin function.</title>
        <authorList>
            <person name="Wesche S."/>
            <person name="Arnold M."/>
            <person name="Jansen R.-P."/>
        </authorList>
    </citation>
    <scope>INTERACTION WITH SHE4</scope>
</reference>
<reference key="22">
    <citation type="journal article" date="2003" name="J. Cell Biol.">
        <title>Identification of an organelle-specific myosin V receptor.</title>
        <authorList>
            <person name="Ishikawa K."/>
            <person name="Catlett N.L."/>
            <person name="Novak J.L."/>
            <person name="Tang F."/>
            <person name="Nau J.J."/>
            <person name="Weisman L.S."/>
        </authorList>
    </citation>
    <scope>INTERACTION WITH VAC17</scope>
    <scope>MUTAGENESIS OF SER-1247; VAL-1262; PHE-1264; SER-1268; THR-1274; PHE-1275 AND VAL-1288</scope>
</reference>
<reference key="23">
    <citation type="journal article" date="2003" name="J. Cell Biol.">
        <title>Spindle orientation in Saccharomyces cerevisiae depends on the transport of microtubule ends along polarized actin cables.</title>
        <authorList>
            <person name="Hwang E."/>
            <person name="Kusch J."/>
            <person name="Barral Y."/>
            <person name="Huffaker T.C."/>
        </authorList>
    </citation>
    <scope>FUNCTION</scope>
</reference>
<reference key="24">
    <citation type="journal article" date="2003" name="Nature">
        <title>Global analysis of protein expression in yeast.</title>
        <authorList>
            <person name="Ghaemmaghami S."/>
            <person name="Huh W.-K."/>
            <person name="Bower K."/>
            <person name="Howson R.W."/>
            <person name="Belle A."/>
            <person name="Dephoure N."/>
            <person name="O'Shea E.K."/>
            <person name="Weissman J.S."/>
        </authorList>
    </citation>
    <scope>LEVEL OF PROTEIN EXPRESSION [LARGE SCALE ANALYSIS]</scope>
</reference>
<reference key="25">
    <citation type="journal article" date="2004" name="EMBO J.">
        <title>Mmr1p is a mitochondrial factor for Myo2p-dependent inheritance of mitochondria in the budding yeast.</title>
        <authorList>
            <person name="Itoh T."/>
            <person name="Toh-e A."/>
            <person name="Matsui Y."/>
        </authorList>
    </citation>
    <scope>INTERACTION WITH MMR1</scope>
</reference>
<reference key="26">
    <citation type="journal article" date="2005" name="Curr. Biol.">
        <title>Structurally conserved interaction of Lgl family with SNAREs is critical to their cellular function.</title>
        <authorList>
            <person name="Gangar A."/>
            <person name="Rossi G."/>
            <person name="Andreeva A."/>
            <person name="Hales R."/>
            <person name="Brennwald P."/>
        </authorList>
    </citation>
    <scope>INTERACTION WITH SRO7</scope>
</reference>
<reference key="27">
    <citation type="journal article" date="2007" name="J. Proteome Res.">
        <title>Large-scale phosphorylation analysis of alpha-factor-arrested Saccharomyces cerevisiae.</title>
        <authorList>
            <person name="Li X."/>
            <person name="Gerber S.A."/>
            <person name="Rudner A.D."/>
            <person name="Beausoleil S.A."/>
            <person name="Haas W."/>
            <person name="Villen J."/>
            <person name="Elias J.E."/>
            <person name="Gygi S.P."/>
        </authorList>
    </citation>
    <scope>IDENTIFICATION BY MASS SPECTROMETRY [LARGE SCALE ANALYSIS]</scope>
    <source>
        <strain>ADR376</strain>
    </source>
</reference>
<reference key="28">
    <citation type="journal article" date="2008" name="Mol. Cell. Proteomics">
        <title>A multidimensional chromatography technology for in-depth phosphoproteome analysis.</title>
        <authorList>
            <person name="Albuquerque C.P."/>
            <person name="Smolka M.B."/>
            <person name="Payne S.H."/>
            <person name="Bafna V."/>
            <person name="Eng J."/>
            <person name="Zhou H."/>
        </authorList>
    </citation>
    <scope>PHOSPHORYLATION [LARGE SCALE ANALYSIS] AT THR-1097 AND SER-1121</scope>
    <scope>IDENTIFICATION BY MASS SPECTROMETRY [LARGE SCALE ANALYSIS]</scope>
</reference>
<reference key="29">
    <citation type="journal article" date="2009" name="Science">
        <title>Global analysis of Cdk1 substrate phosphorylation sites provides insights into evolution.</title>
        <authorList>
            <person name="Holt L.J."/>
            <person name="Tuch B.B."/>
            <person name="Villen J."/>
            <person name="Johnson A.D."/>
            <person name="Gygi S.P."/>
            <person name="Morgan D.O."/>
        </authorList>
    </citation>
    <scope>IDENTIFICATION BY MASS SPECTROMETRY [LARGE SCALE ANALYSIS]</scope>
</reference>
<reference key="30">
    <citation type="journal article" date="2011" name="Mol. Biol. Cell">
        <title>Yeast homologues of lethal giant larvae and type V myosin cooperate in the regulation of Rab-dependent vesicle clustering and polarized exocytosis.</title>
        <authorList>
            <person name="Rossi G."/>
            <person name="Brennwald P."/>
        </authorList>
    </citation>
    <scope>FUNCTION</scope>
    <scope>INTERACTION WITH SRO7</scope>
</reference>
<reference key="31">
    <citation type="journal article" date="2012" name="Proc. Natl. Acad. Sci. U.S.A.">
        <title>N-terminal acetylome analyses and functional insights of the N-terminal acetyltransferase NatB.</title>
        <authorList>
            <person name="Van Damme P."/>
            <person name="Lasa M."/>
            <person name="Polevoda B."/>
            <person name="Gazquez C."/>
            <person name="Elosegui-Artola A."/>
            <person name="Kim D.S."/>
            <person name="De Juan-Pardo E."/>
            <person name="Demeyer K."/>
            <person name="Hole K."/>
            <person name="Larrea E."/>
            <person name="Timmerman E."/>
            <person name="Prieto J."/>
            <person name="Arnesen T."/>
            <person name="Sherman F."/>
            <person name="Gevaert K."/>
            <person name="Aldabe R."/>
        </authorList>
    </citation>
    <scope>ACETYLATION [LARGE SCALE ANALYSIS] AT SER-2</scope>
    <scope>CLEAVAGE OF INITIATOR METHIONINE [LARGE SCALE ANALYSIS]</scope>
    <scope>IDENTIFICATION BY MASS SPECTROMETRY [LARGE SCALE ANALYSIS]</scope>
</reference>
<reference key="32">
    <citation type="journal article" date="2002" name="Acta Crystallogr. D">
        <title>Crystallization, X-ray characterization and selenomethionine phasing of Mlc1p bound to IQ motifs from myosin V.</title>
        <authorList>
            <person name="Terrak M."/>
            <person name="Otterbein L.R."/>
            <person name="Wu G."/>
            <person name="Palecanda L.A."/>
            <person name="Lu R.C."/>
            <person name="Dominguez R."/>
        </authorList>
    </citation>
    <scope>X-RAY CRYSTALLOGRAPHY (1.65 ANGSTROMS) OF 806-878 IN COMPLEX WITH MLC1</scope>
</reference>
<reference key="33">
    <citation type="journal article" date="2003" name="EMBO J.">
        <title>Two distinct myosin light chain structures are induced by specific variations within the bound IQ motifs-functional implications.</title>
        <authorList>
            <person name="Terrak M."/>
            <person name="Wu G."/>
            <person name="Stafford W.F."/>
            <person name="Lu R.C."/>
            <person name="Dominguez R."/>
        </authorList>
    </citation>
    <scope>X-RAY CRYSTALLOGRAPHY (1.65 ANGSTROMS) OF 806-830 AND 854-878 IN COMPLEX WITH MLC1</scope>
</reference>
<sequence>MSFEVGTRCWYPHKELGWIGAEVIKNEFNDGKYHLELQLEDDEIVSVDTKDLNNDKDQSLPLLRNPPILEATEDLTSLSYLNEPAVLHAIKQRYSQLNIYTYSGIVLIATNPFDRVDQLYTQDMIQAYAGKRRGELEPHLFAIAEEAYRLMKNDKQNQTIVVSGESGAGKTVSAKYIMRYFASVEEENSATVQHQVEMSETEQKILATNPIMEAFGNAKTTRNDNSSRFGKYLEILFDKDTSIIGARIRTYLLERSRLVYQPPIERNYHIFYQLMAGLPAQTKEELHLTDASDYFYMNQGGDTKINGIDDAKEYKITVDALTLVGITKETQHQIFKILAALLHIGNIEIKKTRNDASLSADEPNLKLACELLGIDAYNFAKWVTKKQIITRSEKIVSNLNYSQALVAKDSVAKFIYSALFDWLVENINTVLCNPAVNDQISSFIGVLDIYGFEHFEKNSFEQFCINYANEKLQQEFNQHVFKLEQEEYVKEEIEWSFIEFNDNQPCIDLIENKLGILSLLDEESRLPAGSDESWTQKLYQTLDKSPTNKVFSKPRFGQTKFIVSHYALDVAYDVEGFIEKNRDTVSDGHLEVLKASTNETLINILEGLEKAAKKLEEAKKLELEQAGSKKPGPIRTVNRKPTLGSMFKQSLIELMNTINSTNVHYIRCIKPNADKEAWQFDNLMVLSQLRACGVLETIRISCAGFPSRWTFEEFVLRYYILIPHEQWDLIFKKKETTEEDIISVVKMILDATVKDKSKYQIGNTKIFFKAGMLAYLEKLRSNKMHNSIVMIQKKIRAKYYRKQYLQISQAIKYLQNNIKGFIIRQRVNDEMKVNCATLLQAAYRGHSIRANVFSVLRTITNLQKKIRKELKQRQLKQEHEYNAAVTIQSKVRTFEPRSRFLRTKKDTVVVQSLIRRRAAQRKLKQLKADAKSVNHLKEVSYKLENKVIELTQNLASKVKENKEMTERIKELQVQVEESAKLQETLENMKKEHLIDIDNQKSKDMELQKTIENNLQSTEQTLKDAQLELEDMVKQHDELKEESKKQLEELEQTKKTLVEYQTLNGDLQNEVKSLKEEIARLQTAMSLGTVTTSVLPQTPLKDVMGGGASNFNNMMLENSDLSPNDLNLKSRSTPSSGNNHIDSLSVDRENGVNATQINEELYRLLEDTEILNQEITEGLLKGFEVPDAGVAIQLSKRDVVYPARILIIVLSEMWRFGLTKQSESFLAQVLTTIQKVVTQLKGNDLIPSGVFWLANVRELYSFVVFALNSILTEETFKNGMTDEEYKEYVSLVTELKDDFEALSYNIYNIWLKKLQKQLQKKAINAVVISESLPGFSAGETSGFLNKIFANTEEYTMDDILTFFNSIYWCMKSFHIENEVFHAVVTTLLNYVDAICFNELIMKRNFLSWKRGLQLNYNVTRLEEWCKTHGLTDGTECLQHLIQTAKLLQVRKYTIEDIDILRGICYSLTPAQLQKLISQYQVADYESPIPQEILRYVADIVKKEAALSSSGNDSKGHEHSSSIFITPETGPFTDPFSLIKTRKFDQVEAYIPAWLSLPSTKRIVDLVAQQVVQDGH</sequence>
<accession>P19524</accession>
<accession>D6W323</accession>
<comment type="function">
    <text evidence="8 10 11 12 13 15 20 24">Myosin heavy chain that is required for the cell cycle-regulated transport of various organelles and proteins for their segregation. Functions by binding with its tail domain to receptor proteins on organelles and exerting force with its N-terminal motor domain against actin filaments, thereby transporting its cargo along polarized actin cables. Essential for the delivery of secretory vesicles to sites of active growth during bud emergence and cytokinesis. Required for segregation and inheritance of peroxisomes, late Golgi compartments, mitochondria and the vacuole to the daughter cell during cell division. Also required for correct alignment of the spindle during mitosis.</text>
</comment>
<comment type="subunit">
    <text evidence="6 7 9 14 15 16 17 18 19 22 23 24 26 27">Homodimer. Interacts with calmodulin (CMD1) and the myosin light chain MLC1 through its IQ repeats. Binds to the membrane receptors SEC4 and VAC17 to transport secretory vesicles and the vacuole, respectively. Binds to KAR9, which transports BIM1-coated cytoplasmic microtubules that are attached to the spindle pole body into the emerging bud, thereby correctly orienting the mitotic spindle. Interacts with YPT11 and MMR1 to accelerate mitochondrial distribution to the bud. Interacts with SHE4 and localizes it to the bud tip. Interacts with RHO3 and SMY1, putative regulators of MYO2 function. Interacts with SRO7.</text>
</comment>
<comment type="interaction">
    <interactant intactId="EBI-11659">
        <id>P19524</id>
    </interactant>
    <interactant intactId="EBI-27354">
        <id>Q03824</id>
        <label>INP2</label>
    </interactant>
    <organismsDiffer>false</organismsDiffer>
    <experiments>3</experiments>
</comment>
<comment type="interaction">
    <interactant intactId="EBI-11659">
        <id>P19524</id>
    </interactant>
    <interactant intactId="EBI-9516">
        <id>P32526</id>
        <label>KAR9</label>
    </interactant>
    <organismsDiffer>false</organismsDiffer>
    <experiments>2</experiments>
</comment>
<comment type="interaction">
    <interactant intactId="EBI-11659">
        <id>P19524</id>
    </interactant>
    <interactant intactId="EBI-10988">
        <id>P53141</id>
        <label>MLC1</label>
    </interactant>
    <organismsDiffer>false</organismsDiffer>
    <experiments>4</experiments>
</comment>
<comment type="interaction">
    <interactant intactId="EBI-11659">
        <id>P19524</id>
    </interactant>
    <interactant intactId="EBI-17086">
        <id>P51534</id>
        <label>SHE4</label>
    </interactant>
    <organismsDiffer>false</organismsDiffer>
    <experiments>3</experiments>
</comment>
<comment type="interaction">
    <interactant intactId="EBI-11659">
        <id>P19524</id>
    </interactant>
    <interactant intactId="EBI-21800">
        <id>P25591</id>
        <label>VAC17</label>
    </interactant>
    <organismsDiffer>false</organismsDiffer>
    <experiments>7</experiments>
</comment>
<comment type="subcellular location">
    <subcellularLocation>
        <location evidence="25">Bud neck</location>
    </subcellularLocation>
    <subcellularLocation>
        <location evidence="25">Bud tip</location>
    </subcellularLocation>
    <text>Concentrates to sites of polarized growth, namely to the bud tip during S and G2 phases of the cell cycle and to the bud neck during cytokinesis.</text>
</comment>
<comment type="domain">
    <text>The myosin motor domain binds to actin.</text>
</comment>
<comment type="domain">
    <text>The IQ domains provide the interaction surface for the myosin light chain MLC1.</text>
</comment>
<comment type="domain">
    <text>The coiled-coiled domain is necessary for dimerization.</text>
</comment>
<comment type="domain">
    <text>The tail domain is a globular cargo-binding domain involved in vectorial vesicle transport.</text>
</comment>
<comment type="miscellaneous">
    <text evidence="21">Present with 4339 molecules/cell in log phase SD medium.</text>
</comment>
<comment type="miscellaneous">
    <text>Moves with an average velocity of 3 um/s along actin cables.</text>
</comment>
<comment type="similarity">
    <text evidence="29">Belongs to the TRAFAC class myosin-kinesin ATPase superfamily. Myosin family.</text>
</comment>
<evidence type="ECO:0000250" key="1"/>
<evidence type="ECO:0000255" key="2">
    <source>
        <dbReference type="PROSITE-ProRule" id="PRU00116"/>
    </source>
</evidence>
<evidence type="ECO:0000255" key="3">
    <source>
        <dbReference type="PROSITE-ProRule" id="PRU00503"/>
    </source>
</evidence>
<evidence type="ECO:0000255" key="4">
    <source>
        <dbReference type="PROSITE-ProRule" id="PRU00782"/>
    </source>
</evidence>
<evidence type="ECO:0000255" key="5">
    <source>
        <dbReference type="PROSITE-ProRule" id="PRU01190"/>
    </source>
</evidence>
<evidence type="ECO:0000269" key="6">
    <source>
    </source>
</evidence>
<evidence type="ECO:0000269" key="7">
    <source>
    </source>
</evidence>
<evidence type="ECO:0000269" key="8">
    <source>
    </source>
</evidence>
<evidence type="ECO:0000269" key="9">
    <source>
    </source>
</evidence>
<evidence type="ECO:0000269" key="10">
    <source>
    </source>
</evidence>
<evidence type="ECO:0000269" key="11">
    <source>
    </source>
</evidence>
<evidence type="ECO:0000269" key="12">
    <source>
    </source>
</evidence>
<evidence type="ECO:0000269" key="13">
    <source>
    </source>
</evidence>
<evidence type="ECO:0000269" key="14">
    <source>
    </source>
</evidence>
<evidence type="ECO:0000269" key="15">
    <source>
    </source>
</evidence>
<evidence type="ECO:0000269" key="16">
    <source>
    </source>
</evidence>
<evidence type="ECO:0000269" key="17">
    <source>
    </source>
</evidence>
<evidence type="ECO:0000269" key="18">
    <source>
    </source>
</evidence>
<evidence type="ECO:0000269" key="19">
    <source>
    </source>
</evidence>
<evidence type="ECO:0000269" key="20">
    <source>
    </source>
</evidence>
<evidence type="ECO:0000269" key="21">
    <source>
    </source>
</evidence>
<evidence type="ECO:0000269" key="22">
    <source>
    </source>
</evidence>
<evidence type="ECO:0000269" key="23">
    <source>
    </source>
</evidence>
<evidence type="ECO:0000269" key="24">
    <source>
    </source>
</evidence>
<evidence type="ECO:0000269" key="25">
    <source>
    </source>
</evidence>
<evidence type="ECO:0000269" key="26">
    <source>
    </source>
</evidence>
<evidence type="ECO:0000269" key="27">
    <source>
    </source>
</evidence>
<evidence type="ECO:0000269" key="28">
    <source>
    </source>
</evidence>
<evidence type="ECO:0000305" key="29"/>
<evidence type="ECO:0007744" key="30">
    <source>
    </source>
</evidence>
<evidence type="ECO:0007744" key="31">
    <source>
    </source>
</evidence>
<evidence type="ECO:0007829" key="32">
    <source>
        <dbReference type="PDB" id="1M45"/>
    </source>
</evidence>
<evidence type="ECO:0007829" key="33">
    <source>
        <dbReference type="PDB" id="1M46"/>
    </source>
</evidence>
<evidence type="ECO:0007829" key="34">
    <source>
        <dbReference type="PDB" id="2F6H"/>
    </source>
</evidence>
<evidence type="ECO:0007829" key="35">
    <source>
        <dbReference type="PDB" id="6IXO"/>
    </source>
</evidence>
<evidence type="ECO:0007829" key="36">
    <source>
        <dbReference type="PDB" id="6IXP"/>
    </source>
</evidence>
<evidence type="ECO:0007829" key="37">
    <source>
        <dbReference type="PDB" id="6IXR"/>
    </source>
</evidence>
<organism>
    <name type="scientific">Saccharomyces cerevisiae (strain ATCC 204508 / S288c)</name>
    <name type="common">Baker's yeast</name>
    <dbReference type="NCBI Taxonomy" id="559292"/>
    <lineage>
        <taxon>Eukaryota</taxon>
        <taxon>Fungi</taxon>
        <taxon>Dikarya</taxon>
        <taxon>Ascomycota</taxon>
        <taxon>Saccharomycotina</taxon>
        <taxon>Saccharomycetes</taxon>
        <taxon>Saccharomycetales</taxon>
        <taxon>Saccharomycetaceae</taxon>
        <taxon>Saccharomyces</taxon>
    </lineage>
</organism>
<name>MYO2_YEAST</name>